<organism>
    <name type="scientific">Coxiella burnetii (strain RSA 493 / Nine Mile phase I)</name>
    <dbReference type="NCBI Taxonomy" id="227377"/>
    <lineage>
        <taxon>Bacteria</taxon>
        <taxon>Pseudomonadati</taxon>
        <taxon>Pseudomonadota</taxon>
        <taxon>Gammaproteobacteria</taxon>
        <taxon>Legionellales</taxon>
        <taxon>Coxiellaceae</taxon>
        <taxon>Coxiella</taxon>
    </lineage>
</organism>
<dbReference type="EC" id="2.7.7.18" evidence="1"/>
<dbReference type="EMBL" id="AE016828">
    <property type="protein sequence ID" value="AAO90101.2"/>
    <property type="status" value="ALT_INIT"/>
    <property type="molecule type" value="Genomic_DNA"/>
</dbReference>
<dbReference type="RefSeq" id="NP_819587.2">
    <property type="nucleotide sequence ID" value="NC_002971.3"/>
</dbReference>
<dbReference type="SMR" id="Q83DY4"/>
<dbReference type="STRING" id="227377.CBU_0556"/>
<dbReference type="DNASU" id="1208441"/>
<dbReference type="EnsemblBacteria" id="AAO90101">
    <property type="protein sequence ID" value="AAO90101"/>
    <property type="gene ID" value="CBU_0556"/>
</dbReference>
<dbReference type="GeneID" id="1208441"/>
<dbReference type="KEGG" id="cbu:CBU_0556"/>
<dbReference type="PATRIC" id="fig|227377.7.peg.551"/>
<dbReference type="eggNOG" id="COG1057">
    <property type="taxonomic scope" value="Bacteria"/>
</dbReference>
<dbReference type="HOGENOM" id="CLU_069765_0_1_6"/>
<dbReference type="OrthoDB" id="5295945at2"/>
<dbReference type="UniPathway" id="UPA00253">
    <property type="reaction ID" value="UER00332"/>
</dbReference>
<dbReference type="Proteomes" id="UP000002671">
    <property type="component" value="Chromosome"/>
</dbReference>
<dbReference type="GO" id="GO:0005524">
    <property type="term" value="F:ATP binding"/>
    <property type="evidence" value="ECO:0007669"/>
    <property type="project" value="UniProtKB-KW"/>
</dbReference>
<dbReference type="GO" id="GO:0000309">
    <property type="term" value="F:nicotinamide-nucleotide adenylyltransferase activity"/>
    <property type="evidence" value="ECO:0000318"/>
    <property type="project" value="GO_Central"/>
</dbReference>
<dbReference type="GO" id="GO:0004515">
    <property type="term" value="F:nicotinate-nucleotide adenylyltransferase activity"/>
    <property type="evidence" value="ECO:0000318"/>
    <property type="project" value="GO_Central"/>
</dbReference>
<dbReference type="GO" id="GO:0009435">
    <property type="term" value="P:NAD biosynthetic process"/>
    <property type="evidence" value="ECO:0000318"/>
    <property type="project" value="GO_Central"/>
</dbReference>
<dbReference type="CDD" id="cd02165">
    <property type="entry name" value="NMNAT"/>
    <property type="match status" value="1"/>
</dbReference>
<dbReference type="FunFam" id="3.40.50.620:FF:000427">
    <property type="entry name" value="Probable nicotinate-nucleotide adenylyltransferase"/>
    <property type="match status" value="1"/>
</dbReference>
<dbReference type="Gene3D" id="3.40.50.620">
    <property type="entry name" value="HUPs"/>
    <property type="match status" value="1"/>
</dbReference>
<dbReference type="HAMAP" id="MF_00244">
    <property type="entry name" value="NaMN_adenylyltr"/>
    <property type="match status" value="1"/>
</dbReference>
<dbReference type="InterPro" id="IPR004821">
    <property type="entry name" value="Cyt_trans-like"/>
</dbReference>
<dbReference type="InterPro" id="IPR005248">
    <property type="entry name" value="NadD/NMNAT"/>
</dbReference>
<dbReference type="InterPro" id="IPR014729">
    <property type="entry name" value="Rossmann-like_a/b/a_fold"/>
</dbReference>
<dbReference type="NCBIfam" id="TIGR00125">
    <property type="entry name" value="cyt_tran_rel"/>
    <property type="match status" value="1"/>
</dbReference>
<dbReference type="NCBIfam" id="TIGR00482">
    <property type="entry name" value="nicotinate (nicotinamide) nucleotide adenylyltransferase"/>
    <property type="match status" value="1"/>
</dbReference>
<dbReference type="NCBIfam" id="NF000839">
    <property type="entry name" value="PRK00071.1-1"/>
    <property type="match status" value="1"/>
</dbReference>
<dbReference type="PANTHER" id="PTHR39321">
    <property type="entry name" value="NICOTINATE-NUCLEOTIDE ADENYLYLTRANSFERASE-RELATED"/>
    <property type="match status" value="1"/>
</dbReference>
<dbReference type="PANTHER" id="PTHR39321:SF3">
    <property type="entry name" value="PHOSPHOPANTETHEINE ADENYLYLTRANSFERASE"/>
    <property type="match status" value="1"/>
</dbReference>
<dbReference type="Pfam" id="PF01467">
    <property type="entry name" value="CTP_transf_like"/>
    <property type="match status" value="1"/>
</dbReference>
<dbReference type="SUPFAM" id="SSF52374">
    <property type="entry name" value="Nucleotidylyl transferase"/>
    <property type="match status" value="1"/>
</dbReference>
<feature type="chain" id="PRO_0000310112" description="Probable nicotinate-nucleotide adenylyltransferase">
    <location>
        <begin position="1"/>
        <end position="215"/>
    </location>
</feature>
<accession>Q83DY4</accession>
<name>NADD_COXBU</name>
<reference key="1">
    <citation type="journal article" date="2003" name="Proc. Natl. Acad. Sci. U.S.A.">
        <title>Complete genome sequence of the Q-fever pathogen, Coxiella burnetii.</title>
        <authorList>
            <person name="Seshadri R."/>
            <person name="Paulsen I.T."/>
            <person name="Eisen J.A."/>
            <person name="Read T.D."/>
            <person name="Nelson K.E."/>
            <person name="Nelson W.C."/>
            <person name="Ward N.L."/>
            <person name="Tettelin H."/>
            <person name="Davidsen T.M."/>
            <person name="Beanan M.J."/>
            <person name="DeBoy R.T."/>
            <person name="Daugherty S.C."/>
            <person name="Brinkac L.M."/>
            <person name="Madupu R."/>
            <person name="Dodson R.J."/>
            <person name="Khouri H.M."/>
            <person name="Lee K.H."/>
            <person name="Carty H.A."/>
            <person name="Scanlan D."/>
            <person name="Heinzen R.A."/>
            <person name="Thompson H.A."/>
            <person name="Samuel J.E."/>
            <person name="Fraser C.M."/>
            <person name="Heidelberg J.F."/>
        </authorList>
    </citation>
    <scope>NUCLEOTIDE SEQUENCE [LARGE SCALE GENOMIC DNA]</scope>
    <source>
        <strain>RSA 493 / Nine Mile phase I</strain>
    </source>
</reference>
<keyword id="KW-0067">ATP-binding</keyword>
<keyword id="KW-0520">NAD</keyword>
<keyword id="KW-0547">Nucleotide-binding</keyword>
<keyword id="KW-0548">Nucleotidyltransferase</keyword>
<keyword id="KW-0662">Pyridine nucleotide biosynthesis</keyword>
<keyword id="KW-1185">Reference proteome</keyword>
<keyword id="KW-0808">Transferase</keyword>
<protein>
    <recommendedName>
        <fullName evidence="1">Probable nicotinate-nucleotide adenylyltransferase</fullName>
        <ecNumber evidence="1">2.7.7.18</ecNumber>
    </recommendedName>
    <alternativeName>
        <fullName evidence="1">Deamido-NAD(+) diphosphorylase</fullName>
    </alternativeName>
    <alternativeName>
        <fullName evidence="1">Deamido-NAD(+) pyrophosphorylase</fullName>
    </alternativeName>
    <alternativeName>
        <fullName evidence="1">Nicotinate mononucleotide adenylyltransferase</fullName>
        <shortName evidence="1">NaMN adenylyltransferase</shortName>
    </alternativeName>
</protein>
<sequence>MFPLLGLFGGTFDPIHKGHLALANELIQKLPSLTEIQFIPSRQPPHRPSPLASPADRLEMIKRAIANQPNLILNDVEIKGNDISYTINTLKILRPLFLTHALCFILSTDAFADFKHWHQSSVILEYCHLIVVNRPNYRLPQQPWLSDLLSHHQTENAEDLGRFQFGKIFFQTLSPRPISATQIRHYLAKGDYEIVAPLLPKTVLTYIKAHKLYQQ</sequence>
<proteinExistence type="inferred from homology"/>
<evidence type="ECO:0000255" key="1">
    <source>
        <dbReference type="HAMAP-Rule" id="MF_00244"/>
    </source>
</evidence>
<evidence type="ECO:0000305" key="2"/>
<comment type="function">
    <text evidence="1">Catalyzes the reversible adenylation of nicotinate mononucleotide (NaMN) to nicotinic acid adenine dinucleotide (NaAD).</text>
</comment>
<comment type="catalytic activity">
    <reaction evidence="1">
        <text>nicotinate beta-D-ribonucleotide + ATP + H(+) = deamido-NAD(+) + diphosphate</text>
        <dbReference type="Rhea" id="RHEA:22860"/>
        <dbReference type="ChEBI" id="CHEBI:15378"/>
        <dbReference type="ChEBI" id="CHEBI:30616"/>
        <dbReference type="ChEBI" id="CHEBI:33019"/>
        <dbReference type="ChEBI" id="CHEBI:57502"/>
        <dbReference type="ChEBI" id="CHEBI:58437"/>
        <dbReference type="EC" id="2.7.7.18"/>
    </reaction>
</comment>
<comment type="pathway">
    <text evidence="1">Cofactor biosynthesis; NAD(+) biosynthesis; deamido-NAD(+) from nicotinate D-ribonucleotide: step 1/1.</text>
</comment>
<comment type="similarity">
    <text evidence="1">Belongs to the NadD family.</text>
</comment>
<comment type="sequence caution" evidence="2">
    <conflict type="erroneous initiation">
        <sequence resource="EMBL-CDS" id="AAO90101"/>
    </conflict>
</comment>
<gene>
    <name evidence="1" type="primary">nadD</name>
    <name type="ordered locus">CBU_0556</name>
</gene>